<proteinExistence type="inferred from homology"/>
<dbReference type="EMBL" id="U00096">
    <property type="protein sequence ID" value="AAC73955.2"/>
    <property type="molecule type" value="Genomic_DNA"/>
</dbReference>
<dbReference type="EMBL" id="AP009048">
    <property type="protein sequence ID" value="BAA35582.2"/>
    <property type="molecule type" value="Genomic_DNA"/>
</dbReference>
<dbReference type="PIR" id="D64825">
    <property type="entry name" value="D64825"/>
</dbReference>
<dbReference type="RefSeq" id="NP_415389.2">
    <property type="nucleotide sequence ID" value="NC_000913.3"/>
</dbReference>
<dbReference type="RefSeq" id="WP_001338420.1">
    <property type="nucleotide sequence ID" value="NZ_STEB01000019.1"/>
</dbReference>
<dbReference type="SMR" id="P75821"/>
<dbReference type="BioGRID" id="4263498">
    <property type="interactions" value="20"/>
</dbReference>
<dbReference type="BioGRID" id="849869">
    <property type="interactions" value="1"/>
</dbReference>
<dbReference type="FunCoup" id="P75821">
    <property type="interactions" value="446"/>
</dbReference>
<dbReference type="STRING" id="511145.b0868"/>
<dbReference type="jPOST" id="P75821"/>
<dbReference type="PaxDb" id="511145-b0868"/>
<dbReference type="EnsemblBacteria" id="AAC73955">
    <property type="protein sequence ID" value="AAC73955"/>
    <property type="gene ID" value="b0868"/>
</dbReference>
<dbReference type="GeneID" id="945495"/>
<dbReference type="KEGG" id="ecj:JW5819"/>
<dbReference type="KEGG" id="eco:b0868"/>
<dbReference type="KEGG" id="ecoc:C3026_05400"/>
<dbReference type="PATRIC" id="fig|1411691.4.peg.1409"/>
<dbReference type="EchoBASE" id="EB3452"/>
<dbReference type="eggNOG" id="COG0451">
    <property type="taxonomic scope" value="Bacteria"/>
</dbReference>
<dbReference type="HOGENOM" id="CLU_007383_6_1_6"/>
<dbReference type="InParanoid" id="P75821"/>
<dbReference type="OMA" id="STAHWFD"/>
<dbReference type="OrthoDB" id="5292533at2"/>
<dbReference type="PhylomeDB" id="P75821"/>
<dbReference type="BioCyc" id="EcoCyc:G6453-MONOMER"/>
<dbReference type="PRO" id="PR:P75821"/>
<dbReference type="Proteomes" id="UP000000625">
    <property type="component" value="Chromosome"/>
</dbReference>
<dbReference type="Gene3D" id="3.40.50.720">
    <property type="entry name" value="NAD(P)-binding Rossmann-like Domain"/>
    <property type="match status" value="1"/>
</dbReference>
<dbReference type="InterPro" id="IPR001509">
    <property type="entry name" value="Epimerase_deHydtase"/>
</dbReference>
<dbReference type="InterPro" id="IPR050177">
    <property type="entry name" value="Lipid_A_modif_metabolic_enz"/>
</dbReference>
<dbReference type="InterPro" id="IPR036291">
    <property type="entry name" value="NAD(P)-bd_dom_sf"/>
</dbReference>
<dbReference type="PANTHER" id="PTHR43245">
    <property type="entry name" value="BIFUNCTIONAL POLYMYXIN RESISTANCE PROTEIN ARNA"/>
    <property type="match status" value="1"/>
</dbReference>
<dbReference type="PANTHER" id="PTHR43245:SF46">
    <property type="entry name" value="NUCLEOSIDE-DIPHOSPHATE-SUGAR EPIMERASE"/>
    <property type="match status" value="1"/>
</dbReference>
<dbReference type="Pfam" id="PF01370">
    <property type="entry name" value="Epimerase"/>
    <property type="match status" value="1"/>
</dbReference>
<dbReference type="SUPFAM" id="SSF51735">
    <property type="entry name" value="NAD(P)-binding Rossmann-fold domains"/>
    <property type="match status" value="1"/>
</dbReference>
<keyword id="KW-1185">Reference proteome</keyword>
<protein>
    <recommendedName>
        <fullName>Uncharacterized protein YbjS</fullName>
    </recommendedName>
</protein>
<accession>P75821</accession>
<reference key="1">
    <citation type="journal article" date="1996" name="DNA Res.">
        <title>A 718-kb DNA sequence of the Escherichia coli K-12 genome corresponding to the 12.7-28.0 min region on the linkage map.</title>
        <authorList>
            <person name="Oshima T."/>
            <person name="Aiba H."/>
            <person name="Baba T."/>
            <person name="Fujita K."/>
            <person name="Hayashi K."/>
            <person name="Honjo A."/>
            <person name="Ikemoto K."/>
            <person name="Inada T."/>
            <person name="Itoh T."/>
            <person name="Kajihara M."/>
            <person name="Kanai K."/>
            <person name="Kashimoto K."/>
            <person name="Kimura S."/>
            <person name="Kitagawa M."/>
            <person name="Makino K."/>
            <person name="Masuda S."/>
            <person name="Miki T."/>
            <person name="Mizobuchi K."/>
            <person name="Mori H."/>
            <person name="Motomura K."/>
            <person name="Nakamura Y."/>
            <person name="Nashimoto H."/>
            <person name="Nishio Y."/>
            <person name="Saito N."/>
            <person name="Sampei G."/>
            <person name="Seki Y."/>
            <person name="Tagami H."/>
            <person name="Takemoto K."/>
            <person name="Wada C."/>
            <person name="Yamamoto Y."/>
            <person name="Yano M."/>
            <person name="Horiuchi T."/>
        </authorList>
    </citation>
    <scope>NUCLEOTIDE SEQUENCE [LARGE SCALE GENOMIC DNA]</scope>
    <source>
        <strain>K12 / W3110 / ATCC 27325 / DSM 5911</strain>
    </source>
</reference>
<reference key="2">
    <citation type="journal article" date="1997" name="Science">
        <title>The complete genome sequence of Escherichia coli K-12.</title>
        <authorList>
            <person name="Blattner F.R."/>
            <person name="Plunkett G. III"/>
            <person name="Bloch C.A."/>
            <person name="Perna N.T."/>
            <person name="Burland V."/>
            <person name="Riley M."/>
            <person name="Collado-Vides J."/>
            <person name="Glasner J.D."/>
            <person name="Rode C.K."/>
            <person name="Mayhew G.F."/>
            <person name="Gregor J."/>
            <person name="Davis N.W."/>
            <person name="Kirkpatrick H.A."/>
            <person name="Goeden M.A."/>
            <person name="Rose D.J."/>
            <person name="Mau B."/>
            <person name="Shao Y."/>
        </authorList>
    </citation>
    <scope>NUCLEOTIDE SEQUENCE [LARGE SCALE GENOMIC DNA]</scope>
    <source>
        <strain>K12 / MG1655 / ATCC 47076</strain>
    </source>
</reference>
<reference key="3">
    <citation type="journal article" date="2006" name="Mol. Syst. Biol.">
        <title>Highly accurate genome sequences of Escherichia coli K-12 strains MG1655 and W3110.</title>
        <authorList>
            <person name="Hayashi K."/>
            <person name="Morooka N."/>
            <person name="Yamamoto Y."/>
            <person name="Fujita K."/>
            <person name="Isono K."/>
            <person name="Choi S."/>
            <person name="Ohtsubo E."/>
            <person name="Baba T."/>
            <person name="Wanner B.L."/>
            <person name="Mori H."/>
            <person name="Horiuchi T."/>
        </authorList>
    </citation>
    <scope>NUCLEOTIDE SEQUENCE [LARGE SCALE GENOMIC DNA]</scope>
    <source>
        <strain>K12 / W3110 / ATCC 27325 / DSM 5911</strain>
    </source>
</reference>
<sequence length="337" mass="38086">MKVLVTGATSGLGRNAVEFLCQKGISVRATGRNEAMGKLLEKMGAEFVPADLTELVSSQAKVMLAGIDTLWHCSSFTSPWGTQQAFDLANVRATRRLGEWAVAWGVRNFIHISSPSLYFDYHHHRDIKEDFRPHRFANEFARSKAASEEVINMLSQANPQTRFTILRPQSLFGPHDKVFIPRLAHMMHHYGSILLPHGGSALVDMTYYENAVHAMWLASQEACDKLPSGRVYNITNGEHRTLRSIVQKLIDELNIDCRIRSVPYPMLDMIARSMERLGRKSAKEPPLTHYGVSKLNFDFTLDITRAQEELGYQPVITLDEGIEKTAAWLRDHGKLPR</sequence>
<feature type="chain" id="PRO_0000201310" description="Uncharacterized protein YbjS">
    <location>
        <begin position="1"/>
        <end position="337"/>
    </location>
</feature>
<organism>
    <name type="scientific">Escherichia coli (strain K12)</name>
    <dbReference type="NCBI Taxonomy" id="83333"/>
    <lineage>
        <taxon>Bacteria</taxon>
        <taxon>Pseudomonadati</taxon>
        <taxon>Pseudomonadota</taxon>
        <taxon>Gammaproteobacteria</taxon>
        <taxon>Enterobacterales</taxon>
        <taxon>Enterobacteriaceae</taxon>
        <taxon>Escherichia</taxon>
    </lineage>
</organism>
<evidence type="ECO:0000305" key="1"/>
<comment type="similarity">
    <text evidence="1">Belongs to the NAD(P)-dependent epimerase/dehydratase family.</text>
</comment>
<gene>
    <name type="primary">ybjS</name>
    <name type="ordered locus">b0868</name>
    <name type="ordered locus">JW5819</name>
</gene>
<name>YBJS_ECOLI</name>